<gene>
    <name evidence="1" type="primary">cutA</name>
    <name type="ordered locus">YPTB0400</name>
</gene>
<keyword id="KW-0186">Copper</keyword>
<keyword id="KW-0963">Cytoplasm</keyword>
<keyword id="KW-0479">Metal-binding</keyword>
<organism>
    <name type="scientific">Yersinia pseudotuberculosis serotype I (strain IP32953)</name>
    <dbReference type="NCBI Taxonomy" id="273123"/>
    <lineage>
        <taxon>Bacteria</taxon>
        <taxon>Pseudomonadati</taxon>
        <taxon>Pseudomonadota</taxon>
        <taxon>Gammaproteobacteria</taxon>
        <taxon>Enterobacterales</taxon>
        <taxon>Yersiniaceae</taxon>
        <taxon>Yersinia</taxon>
    </lineage>
</organism>
<comment type="function">
    <text evidence="1">Involved in resistance toward heavy metals.</text>
</comment>
<comment type="cofactor">
    <cofactor evidence="1">
        <name>Cu cation</name>
        <dbReference type="ChEBI" id="CHEBI:23378"/>
    </cofactor>
    <text evidence="1">Binds 1 copper ion per subunit.</text>
</comment>
<comment type="subunit">
    <text evidence="1">Homotrimer.</text>
</comment>
<comment type="subcellular location">
    <subcellularLocation>
        <location evidence="1">Cytoplasm</location>
    </subcellularLocation>
</comment>
<comment type="similarity">
    <text evidence="1">Belongs to the CutA family.</text>
</comment>
<proteinExistence type="inferred from homology"/>
<sequence>MSDSDAMTDPNAVSYSNAIVVLCTAPDEASAQNLAAQVLGEKLAACVTLLPGATSLYYWEGKLEQEYEVQLLFKSNTDHQQALLTYIKQHHPYQTPELLVLPVRDGDKDYLSWLNASLL</sequence>
<protein>
    <recommendedName>
        <fullName evidence="1">Divalent-cation tolerance protein CutA</fullName>
    </recommendedName>
</protein>
<evidence type="ECO:0000255" key="1">
    <source>
        <dbReference type="HAMAP-Rule" id="MF_01160"/>
    </source>
</evidence>
<name>CUTA_YERPS</name>
<accession>Q66FE0</accession>
<feature type="chain" id="PRO_0000157127" description="Divalent-cation tolerance protein CutA">
    <location>
        <begin position="1"/>
        <end position="119"/>
    </location>
</feature>
<feature type="binding site" evidence="1">
    <location>
        <position position="23"/>
    </location>
    <ligand>
        <name>Cu cation</name>
        <dbReference type="ChEBI" id="CHEBI:23378"/>
    </ligand>
</feature>
<feature type="binding site" evidence="1">
    <location>
        <position position="90"/>
    </location>
    <ligand>
        <name>Cu cation</name>
        <dbReference type="ChEBI" id="CHEBI:23378"/>
    </ligand>
</feature>
<feature type="binding site" evidence="1">
    <location>
        <position position="91"/>
    </location>
    <ligand>
        <name>Cu cation</name>
        <dbReference type="ChEBI" id="CHEBI:23378"/>
    </ligand>
</feature>
<dbReference type="EMBL" id="BX936398">
    <property type="protein sequence ID" value="CAH19640.1"/>
    <property type="molecule type" value="Genomic_DNA"/>
</dbReference>
<dbReference type="RefSeq" id="WP_002209122.1">
    <property type="nucleotide sequence ID" value="NZ_CP009712.1"/>
</dbReference>
<dbReference type="SMR" id="Q66FE0"/>
<dbReference type="GeneID" id="57974262"/>
<dbReference type="KEGG" id="yps:YPTB0400"/>
<dbReference type="Proteomes" id="UP000001011">
    <property type="component" value="Chromosome"/>
</dbReference>
<dbReference type="GO" id="GO:0005737">
    <property type="term" value="C:cytoplasm"/>
    <property type="evidence" value="ECO:0007669"/>
    <property type="project" value="UniProtKB-SubCell"/>
</dbReference>
<dbReference type="GO" id="GO:0005507">
    <property type="term" value="F:copper ion binding"/>
    <property type="evidence" value="ECO:0007669"/>
    <property type="project" value="UniProtKB-UniRule"/>
</dbReference>
<dbReference type="GO" id="GO:0010038">
    <property type="term" value="P:response to metal ion"/>
    <property type="evidence" value="ECO:0007669"/>
    <property type="project" value="InterPro"/>
</dbReference>
<dbReference type="FunFam" id="3.30.70.120:FF:000004">
    <property type="entry name" value="Divalent-cation tolerance protein CutA"/>
    <property type="match status" value="1"/>
</dbReference>
<dbReference type="Gene3D" id="3.30.70.120">
    <property type="match status" value="1"/>
</dbReference>
<dbReference type="HAMAP" id="MF_01160">
    <property type="entry name" value="CutA"/>
    <property type="match status" value="1"/>
</dbReference>
<dbReference type="InterPro" id="IPR023700">
    <property type="entry name" value="CutA_Enterobact"/>
</dbReference>
<dbReference type="InterPro" id="IPR004323">
    <property type="entry name" value="Ion_tolerance_CutA"/>
</dbReference>
<dbReference type="InterPro" id="IPR011322">
    <property type="entry name" value="N-reg_PII-like_a/b"/>
</dbReference>
<dbReference type="InterPro" id="IPR015867">
    <property type="entry name" value="N-reg_PII/ATP_PRibTrfase_C"/>
</dbReference>
<dbReference type="NCBIfam" id="NF007930">
    <property type="entry name" value="PRK10645.1"/>
    <property type="match status" value="1"/>
</dbReference>
<dbReference type="PANTHER" id="PTHR23419">
    <property type="entry name" value="DIVALENT CATION TOLERANCE CUTA-RELATED"/>
    <property type="match status" value="1"/>
</dbReference>
<dbReference type="PANTHER" id="PTHR23419:SF8">
    <property type="entry name" value="FI09726P"/>
    <property type="match status" value="1"/>
</dbReference>
<dbReference type="Pfam" id="PF03091">
    <property type="entry name" value="CutA1"/>
    <property type="match status" value="1"/>
</dbReference>
<dbReference type="SUPFAM" id="SSF54913">
    <property type="entry name" value="GlnB-like"/>
    <property type="match status" value="1"/>
</dbReference>
<reference key="1">
    <citation type="journal article" date="2004" name="Proc. Natl. Acad. Sci. U.S.A.">
        <title>Insights into the evolution of Yersinia pestis through whole-genome comparison with Yersinia pseudotuberculosis.</title>
        <authorList>
            <person name="Chain P.S.G."/>
            <person name="Carniel E."/>
            <person name="Larimer F.W."/>
            <person name="Lamerdin J."/>
            <person name="Stoutland P.O."/>
            <person name="Regala W.M."/>
            <person name="Georgescu A.M."/>
            <person name="Vergez L.M."/>
            <person name="Land M.L."/>
            <person name="Motin V.L."/>
            <person name="Brubaker R.R."/>
            <person name="Fowler J."/>
            <person name="Hinnebusch J."/>
            <person name="Marceau M."/>
            <person name="Medigue C."/>
            <person name="Simonet M."/>
            <person name="Chenal-Francisque V."/>
            <person name="Souza B."/>
            <person name="Dacheux D."/>
            <person name="Elliott J.M."/>
            <person name="Derbise A."/>
            <person name="Hauser L.J."/>
            <person name="Garcia E."/>
        </authorList>
    </citation>
    <scope>NUCLEOTIDE SEQUENCE [LARGE SCALE GENOMIC DNA]</scope>
    <source>
        <strain>IP32953</strain>
    </source>
</reference>